<gene>
    <name evidence="1" type="primary">rnfC</name>
    <name type="ordered locus">PC1_2023</name>
</gene>
<comment type="function">
    <text evidence="1">Part of a membrane-bound complex that couples electron transfer with translocation of ions across the membrane.</text>
</comment>
<comment type="cofactor">
    <cofactor evidence="1">
        <name>[4Fe-4S] cluster</name>
        <dbReference type="ChEBI" id="CHEBI:49883"/>
    </cofactor>
    <text evidence="1">Binds 2 [4Fe-4S] clusters per subunit.</text>
</comment>
<comment type="subunit">
    <text evidence="1">The complex is composed of six subunits: RnfA, RnfB, RnfC, RnfD, RnfE and RnfG.</text>
</comment>
<comment type="subcellular location">
    <subcellularLocation>
        <location evidence="1">Cell inner membrane</location>
        <topology evidence="1">Peripheral membrane protein</topology>
    </subcellularLocation>
</comment>
<comment type="similarity">
    <text evidence="1">Belongs to the 4Fe4S bacterial-type ferredoxin family. RnfC subfamily.</text>
</comment>
<organism>
    <name type="scientific">Pectobacterium carotovorum subsp. carotovorum (strain PC1)</name>
    <dbReference type="NCBI Taxonomy" id="561230"/>
    <lineage>
        <taxon>Bacteria</taxon>
        <taxon>Pseudomonadati</taxon>
        <taxon>Pseudomonadota</taxon>
        <taxon>Gammaproteobacteria</taxon>
        <taxon>Enterobacterales</taxon>
        <taxon>Pectobacteriaceae</taxon>
        <taxon>Pectobacterium</taxon>
    </lineage>
</organism>
<keyword id="KW-0004">4Fe-4S</keyword>
<keyword id="KW-0997">Cell inner membrane</keyword>
<keyword id="KW-1003">Cell membrane</keyword>
<keyword id="KW-0249">Electron transport</keyword>
<keyword id="KW-0408">Iron</keyword>
<keyword id="KW-0411">Iron-sulfur</keyword>
<keyword id="KW-0472">Membrane</keyword>
<keyword id="KW-0479">Metal-binding</keyword>
<keyword id="KW-0677">Repeat</keyword>
<keyword id="KW-1278">Translocase</keyword>
<keyword id="KW-0813">Transport</keyword>
<dbReference type="EC" id="7.-.-.-" evidence="1"/>
<dbReference type="EMBL" id="CP001657">
    <property type="protein sequence ID" value="ACT13064.1"/>
    <property type="molecule type" value="Genomic_DNA"/>
</dbReference>
<dbReference type="SMR" id="C6DH15"/>
<dbReference type="STRING" id="561230.PC1_2023"/>
<dbReference type="KEGG" id="pct:PC1_2023"/>
<dbReference type="eggNOG" id="COG4656">
    <property type="taxonomic scope" value="Bacteria"/>
</dbReference>
<dbReference type="HOGENOM" id="CLU_010808_2_1_6"/>
<dbReference type="OrthoDB" id="9767754at2"/>
<dbReference type="Proteomes" id="UP000002736">
    <property type="component" value="Chromosome"/>
</dbReference>
<dbReference type="GO" id="GO:0005886">
    <property type="term" value="C:plasma membrane"/>
    <property type="evidence" value="ECO:0007669"/>
    <property type="project" value="UniProtKB-SubCell"/>
</dbReference>
<dbReference type="GO" id="GO:0051539">
    <property type="term" value="F:4 iron, 4 sulfur cluster binding"/>
    <property type="evidence" value="ECO:0007669"/>
    <property type="project" value="UniProtKB-KW"/>
</dbReference>
<dbReference type="GO" id="GO:0009055">
    <property type="term" value="F:electron transfer activity"/>
    <property type="evidence" value="ECO:0007669"/>
    <property type="project" value="InterPro"/>
</dbReference>
<dbReference type="GO" id="GO:0046872">
    <property type="term" value="F:metal ion binding"/>
    <property type="evidence" value="ECO:0007669"/>
    <property type="project" value="UniProtKB-KW"/>
</dbReference>
<dbReference type="GO" id="GO:0022900">
    <property type="term" value="P:electron transport chain"/>
    <property type="evidence" value="ECO:0007669"/>
    <property type="project" value="UniProtKB-UniRule"/>
</dbReference>
<dbReference type="Gene3D" id="3.30.70.20">
    <property type="match status" value="1"/>
</dbReference>
<dbReference type="Gene3D" id="3.40.50.11540">
    <property type="entry name" value="NADH-ubiquinone oxidoreductase 51kDa subunit"/>
    <property type="match status" value="1"/>
</dbReference>
<dbReference type="HAMAP" id="MF_00461">
    <property type="entry name" value="RsxC_RnfC"/>
    <property type="match status" value="1"/>
</dbReference>
<dbReference type="InterPro" id="IPR017896">
    <property type="entry name" value="4Fe4S_Fe-S-bd"/>
</dbReference>
<dbReference type="InterPro" id="IPR017900">
    <property type="entry name" value="4Fe4S_Fe_S_CS"/>
</dbReference>
<dbReference type="InterPro" id="IPR010208">
    <property type="entry name" value="Ion_transpt_RnfC/RsxC"/>
</dbReference>
<dbReference type="InterPro" id="IPR011538">
    <property type="entry name" value="Nuo51_FMN-bd"/>
</dbReference>
<dbReference type="InterPro" id="IPR037225">
    <property type="entry name" value="Nuo51_FMN-bd_sf"/>
</dbReference>
<dbReference type="InterPro" id="IPR026902">
    <property type="entry name" value="RnfC_N"/>
</dbReference>
<dbReference type="InterPro" id="IPR019554">
    <property type="entry name" value="Soluble_ligand-bd"/>
</dbReference>
<dbReference type="NCBIfam" id="NF003454">
    <property type="entry name" value="PRK05035.1"/>
    <property type="match status" value="1"/>
</dbReference>
<dbReference type="NCBIfam" id="TIGR01945">
    <property type="entry name" value="rnfC"/>
    <property type="match status" value="1"/>
</dbReference>
<dbReference type="PANTHER" id="PTHR43034">
    <property type="entry name" value="ION-TRANSLOCATING OXIDOREDUCTASE COMPLEX SUBUNIT C"/>
    <property type="match status" value="1"/>
</dbReference>
<dbReference type="PANTHER" id="PTHR43034:SF2">
    <property type="entry name" value="ION-TRANSLOCATING OXIDOREDUCTASE COMPLEX SUBUNIT C"/>
    <property type="match status" value="1"/>
</dbReference>
<dbReference type="Pfam" id="PF01512">
    <property type="entry name" value="Complex1_51K"/>
    <property type="match status" value="1"/>
</dbReference>
<dbReference type="Pfam" id="PF12838">
    <property type="entry name" value="Fer4_7"/>
    <property type="match status" value="1"/>
</dbReference>
<dbReference type="Pfam" id="PF13375">
    <property type="entry name" value="RnfC_N"/>
    <property type="match status" value="1"/>
</dbReference>
<dbReference type="Pfam" id="PF10531">
    <property type="entry name" value="SLBB"/>
    <property type="match status" value="1"/>
</dbReference>
<dbReference type="SUPFAM" id="SSF46548">
    <property type="entry name" value="alpha-helical ferredoxin"/>
    <property type="match status" value="1"/>
</dbReference>
<dbReference type="SUPFAM" id="SSF142019">
    <property type="entry name" value="Nqo1 FMN-binding domain-like"/>
    <property type="match status" value="1"/>
</dbReference>
<dbReference type="PROSITE" id="PS00198">
    <property type="entry name" value="4FE4S_FER_1"/>
    <property type="match status" value="2"/>
</dbReference>
<dbReference type="PROSITE" id="PS51379">
    <property type="entry name" value="4FE4S_FER_2"/>
    <property type="match status" value="2"/>
</dbReference>
<feature type="chain" id="PRO_1000206294" description="Ion-translocating oxidoreductase complex subunit C">
    <location>
        <begin position="1"/>
        <end position="747"/>
    </location>
</feature>
<feature type="domain" description="4Fe-4S ferredoxin-type 1" evidence="1">
    <location>
        <begin position="368"/>
        <end position="397"/>
    </location>
</feature>
<feature type="domain" description="4Fe-4S ferredoxin-type 2" evidence="1">
    <location>
        <begin position="407"/>
        <end position="436"/>
    </location>
</feature>
<feature type="region of interest" description="Disordered" evidence="2">
    <location>
        <begin position="538"/>
        <end position="564"/>
    </location>
</feature>
<feature type="binding site" evidence="1">
    <location>
        <position position="377"/>
    </location>
    <ligand>
        <name>[4Fe-4S] cluster</name>
        <dbReference type="ChEBI" id="CHEBI:49883"/>
        <label>1</label>
    </ligand>
</feature>
<feature type="binding site" evidence="1">
    <location>
        <position position="380"/>
    </location>
    <ligand>
        <name>[4Fe-4S] cluster</name>
        <dbReference type="ChEBI" id="CHEBI:49883"/>
        <label>1</label>
    </ligand>
</feature>
<feature type="binding site" evidence="1">
    <location>
        <position position="383"/>
    </location>
    <ligand>
        <name>[4Fe-4S] cluster</name>
        <dbReference type="ChEBI" id="CHEBI:49883"/>
        <label>1</label>
    </ligand>
</feature>
<feature type="binding site" evidence="1">
    <location>
        <position position="387"/>
    </location>
    <ligand>
        <name>[4Fe-4S] cluster</name>
        <dbReference type="ChEBI" id="CHEBI:49883"/>
        <label>2</label>
    </ligand>
</feature>
<feature type="binding site" evidence="1">
    <location>
        <position position="416"/>
    </location>
    <ligand>
        <name>[4Fe-4S] cluster</name>
        <dbReference type="ChEBI" id="CHEBI:49883"/>
        <label>2</label>
    </ligand>
</feature>
<feature type="binding site" evidence="1">
    <location>
        <position position="419"/>
    </location>
    <ligand>
        <name>[4Fe-4S] cluster</name>
        <dbReference type="ChEBI" id="CHEBI:49883"/>
        <label>2</label>
    </ligand>
</feature>
<feature type="binding site" evidence="1">
    <location>
        <position position="422"/>
    </location>
    <ligand>
        <name>[4Fe-4S] cluster</name>
        <dbReference type="ChEBI" id="CHEBI:49883"/>
        <label>2</label>
    </ligand>
</feature>
<feature type="binding site" evidence="1">
    <location>
        <position position="426"/>
    </location>
    <ligand>
        <name>[4Fe-4S] cluster</name>
        <dbReference type="ChEBI" id="CHEBI:49883"/>
        <label>1</label>
    </ligand>
</feature>
<name>RNFC_PECCP</name>
<evidence type="ECO:0000255" key="1">
    <source>
        <dbReference type="HAMAP-Rule" id="MF_00461"/>
    </source>
</evidence>
<evidence type="ECO:0000256" key="2">
    <source>
        <dbReference type="SAM" id="MobiDB-lite"/>
    </source>
</evidence>
<protein>
    <recommendedName>
        <fullName evidence="1">Ion-translocating oxidoreductase complex subunit C</fullName>
        <ecNumber evidence="1">7.-.-.-</ecNumber>
    </recommendedName>
    <alternativeName>
        <fullName evidence="1">Rnf electron transport complex subunit C</fullName>
    </alternativeName>
</protein>
<accession>C6DH15</accession>
<sequence length="747" mass="80277">MLKLFSAFKKDRIWDFDGGIHPPEMKTQSSRTPLRQIPLPEQFIIPLKQHLGPEGEICVSVGDKVLRGQPLTRGRGRTLPVHAPTSGTVNAIRQHTTAHPSGLSELSIIIVPDGEDRWSDRQTLADYQTQSTDTLLAHLHQAGIAGLGGAGFPTAAKLQGGMRGIETLIINGAECEPYITADDRLMQECADEIIQGVEILSFLLQPKRILIGIEDNKPEAISALRLALGKRSDMQLRVIPTKYPSGGAKQLTKILTGKEVPFGKHSAAIGVLMQNVGTAFAIKRAVIDGEPLTERVVTLTGEALRQPGNVWARLGTPVRHLLKQGGFHVNKQPMVVMGGPLMGFTLPSLDVPIVKISNCLLAPSHTEMEPVAEEQSCIRCSQCADACPAGLLPQQLYWFSRGQEHEKARNHHLFDCIECGACAYVCPSNIPLVQYYRQEKAEIRAIDEDAQRAAQAKVRFDAKQARLEREKAARELRHKQAATGVSTSDKDAVQAALERVRRKQSTTTEIGAPIAVMPDAQPDNSAAIAARAARKALVREERARENQTQQETPTVDVPSTELDDPRKAAVAAALARVKARKAAQQTATNAEAPVSSVTSDVVAEPVAVVETQEPDDPRKAAVAAAIARVKARKAAQQTATNAEAPVSSVTSDVVAEPVAVVETQEPDDPRKAAVAAAIARVKARKAAQQTATNAEAPVSSVASDIVAEPVAVVETQEPEDPRKAAVAAAIARVKARKAAQASSHQEE</sequence>
<proteinExistence type="inferred from homology"/>
<reference key="1">
    <citation type="submission" date="2009-07" db="EMBL/GenBank/DDBJ databases">
        <title>Complete sequence of Pectobacterium carotovorum subsp. carotovorum PC1.</title>
        <authorList>
            <consortium name="US DOE Joint Genome Institute"/>
            <person name="Lucas S."/>
            <person name="Copeland A."/>
            <person name="Lapidus A."/>
            <person name="Glavina del Rio T."/>
            <person name="Tice H."/>
            <person name="Bruce D."/>
            <person name="Goodwin L."/>
            <person name="Pitluck S."/>
            <person name="Munk A.C."/>
            <person name="Brettin T."/>
            <person name="Detter J.C."/>
            <person name="Han C."/>
            <person name="Tapia R."/>
            <person name="Larimer F."/>
            <person name="Land M."/>
            <person name="Hauser L."/>
            <person name="Kyrpides N."/>
            <person name="Mikhailova N."/>
            <person name="Balakrishnan V."/>
            <person name="Glasner J."/>
            <person name="Perna N.T."/>
        </authorList>
    </citation>
    <scope>NUCLEOTIDE SEQUENCE [LARGE SCALE GENOMIC DNA]</scope>
    <source>
        <strain>PC1</strain>
    </source>
</reference>